<sequence>MTLKIGIVGAGGRMGRQLIQAVYHTEGVELGAAFERVGSSLVGTDAGELAGVGKLGIKVSDNLTQEKDNFDLLVDFTRPEGTLQHLAFCVEHHKNIVIGTTGFDDQSKQAIQQAAQNIAIVFASNYSVGVNLVFKLLKKAAKVMGDYCDIEIIEAHHRHKVDAPSGTALSMGEHIAKTLGRDLKTHGVFSREGITGERKPDEIGFSTIRAADVVGEHTVWFADIGERVEISHKASSRMTFANGAVRAAKWLSTKQEGLFDMTDVLDLNNL</sequence>
<proteinExistence type="inferred from homology"/>
<gene>
    <name evidence="1" type="primary">dapB</name>
    <name type="ordered locus">HS_0835</name>
</gene>
<reference key="1">
    <citation type="journal article" date="2007" name="J. Bacteriol.">
        <title>Complete genome sequence of Haemophilus somnus (Histophilus somni) strain 129Pt and comparison to Haemophilus ducreyi 35000HP and Haemophilus influenzae Rd.</title>
        <authorList>
            <person name="Challacombe J.F."/>
            <person name="Duncan A.J."/>
            <person name="Brettin T.S."/>
            <person name="Bruce D."/>
            <person name="Chertkov O."/>
            <person name="Detter J.C."/>
            <person name="Han C.S."/>
            <person name="Misra M."/>
            <person name="Richardson P."/>
            <person name="Tapia R."/>
            <person name="Thayer N."/>
            <person name="Xie G."/>
            <person name="Inzana T.J."/>
        </authorList>
    </citation>
    <scope>NUCLEOTIDE SEQUENCE [LARGE SCALE GENOMIC DNA]</scope>
    <source>
        <strain>129Pt</strain>
    </source>
</reference>
<dbReference type="EC" id="1.17.1.8" evidence="1"/>
<dbReference type="EMBL" id="CP000436">
    <property type="protein sequence ID" value="ABI25110.1"/>
    <property type="molecule type" value="Genomic_DNA"/>
</dbReference>
<dbReference type="SMR" id="Q0I3N1"/>
<dbReference type="KEGG" id="hso:HS_0835"/>
<dbReference type="eggNOG" id="COG0289">
    <property type="taxonomic scope" value="Bacteria"/>
</dbReference>
<dbReference type="HOGENOM" id="CLU_047479_2_1_6"/>
<dbReference type="UniPathway" id="UPA00034">
    <property type="reaction ID" value="UER00018"/>
</dbReference>
<dbReference type="GO" id="GO:0005829">
    <property type="term" value="C:cytosol"/>
    <property type="evidence" value="ECO:0007669"/>
    <property type="project" value="TreeGrafter"/>
</dbReference>
<dbReference type="GO" id="GO:0008839">
    <property type="term" value="F:4-hydroxy-tetrahydrodipicolinate reductase"/>
    <property type="evidence" value="ECO:0007669"/>
    <property type="project" value="UniProtKB-EC"/>
</dbReference>
<dbReference type="GO" id="GO:0051287">
    <property type="term" value="F:NAD binding"/>
    <property type="evidence" value="ECO:0007669"/>
    <property type="project" value="UniProtKB-UniRule"/>
</dbReference>
<dbReference type="GO" id="GO:0050661">
    <property type="term" value="F:NADP binding"/>
    <property type="evidence" value="ECO:0007669"/>
    <property type="project" value="UniProtKB-UniRule"/>
</dbReference>
<dbReference type="GO" id="GO:0016726">
    <property type="term" value="F:oxidoreductase activity, acting on CH or CH2 groups, NAD or NADP as acceptor"/>
    <property type="evidence" value="ECO:0007669"/>
    <property type="project" value="UniProtKB-UniRule"/>
</dbReference>
<dbReference type="GO" id="GO:0019877">
    <property type="term" value="P:diaminopimelate biosynthetic process"/>
    <property type="evidence" value="ECO:0007669"/>
    <property type="project" value="UniProtKB-UniRule"/>
</dbReference>
<dbReference type="GO" id="GO:0009089">
    <property type="term" value="P:lysine biosynthetic process via diaminopimelate"/>
    <property type="evidence" value="ECO:0007669"/>
    <property type="project" value="UniProtKB-UniRule"/>
</dbReference>
<dbReference type="CDD" id="cd02274">
    <property type="entry name" value="DHDPR_N"/>
    <property type="match status" value="1"/>
</dbReference>
<dbReference type="FunFam" id="3.30.360.10:FF:000004">
    <property type="entry name" value="4-hydroxy-tetrahydrodipicolinate reductase"/>
    <property type="match status" value="1"/>
</dbReference>
<dbReference type="FunFam" id="3.40.50.720:FF:000048">
    <property type="entry name" value="4-hydroxy-tetrahydrodipicolinate reductase"/>
    <property type="match status" value="1"/>
</dbReference>
<dbReference type="Gene3D" id="3.30.360.10">
    <property type="entry name" value="Dihydrodipicolinate Reductase, domain 2"/>
    <property type="match status" value="1"/>
</dbReference>
<dbReference type="Gene3D" id="3.40.50.720">
    <property type="entry name" value="NAD(P)-binding Rossmann-like Domain"/>
    <property type="match status" value="1"/>
</dbReference>
<dbReference type="HAMAP" id="MF_00102">
    <property type="entry name" value="DapB"/>
    <property type="match status" value="1"/>
</dbReference>
<dbReference type="InterPro" id="IPR022663">
    <property type="entry name" value="DapB_C"/>
</dbReference>
<dbReference type="InterPro" id="IPR000846">
    <property type="entry name" value="DapB_N"/>
</dbReference>
<dbReference type="InterPro" id="IPR022664">
    <property type="entry name" value="DapB_N_CS"/>
</dbReference>
<dbReference type="InterPro" id="IPR023940">
    <property type="entry name" value="DHDPR_bac"/>
</dbReference>
<dbReference type="InterPro" id="IPR036291">
    <property type="entry name" value="NAD(P)-bd_dom_sf"/>
</dbReference>
<dbReference type="NCBIfam" id="TIGR00036">
    <property type="entry name" value="dapB"/>
    <property type="match status" value="1"/>
</dbReference>
<dbReference type="PANTHER" id="PTHR20836:SF0">
    <property type="entry name" value="4-HYDROXY-TETRAHYDRODIPICOLINATE REDUCTASE 1, CHLOROPLASTIC-RELATED"/>
    <property type="match status" value="1"/>
</dbReference>
<dbReference type="PANTHER" id="PTHR20836">
    <property type="entry name" value="DIHYDRODIPICOLINATE REDUCTASE"/>
    <property type="match status" value="1"/>
</dbReference>
<dbReference type="Pfam" id="PF05173">
    <property type="entry name" value="DapB_C"/>
    <property type="match status" value="1"/>
</dbReference>
<dbReference type="Pfam" id="PF01113">
    <property type="entry name" value="DapB_N"/>
    <property type="match status" value="1"/>
</dbReference>
<dbReference type="PIRSF" id="PIRSF000161">
    <property type="entry name" value="DHPR"/>
    <property type="match status" value="1"/>
</dbReference>
<dbReference type="SUPFAM" id="SSF55347">
    <property type="entry name" value="Glyceraldehyde-3-phosphate dehydrogenase-like, C-terminal domain"/>
    <property type="match status" value="1"/>
</dbReference>
<dbReference type="SUPFAM" id="SSF51735">
    <property type="entry name" value="NAD(P)-binding Rossmann-fold domains"/>
    <property type="match status" value="1"/>
</dbReference>
<dbReference type="PROSITE" id="PS01298">
    <property type="entry name" value="DAPB"/>
    <property type="match status" value="1"/>
</dbReference>
<accession>Q0I3N1</accession>
<feature type="chain" id="PRO_1000008569" description="4-hydroxy-tetrahydrodipicolinate reductase">
    <location>
        <begin position="1"/>
        <end position="270"/>
    </location>
</feature>
<feature type="active site" description="Proton donor/acceptor" evidence="1">
    <location>
        <position position="156"/>
    </location>
</feature>
<feature type="active site" description="Proton donor" evidence="1">
    <location>
        <position position="160"/>
    </location>
</feature>
<feature type="binding site" evidence="1">
    <location>
        <begin position="9"/>
        <end position="14"/>
    </location>
    <ligand>
        <name>NAD(+)</name>
        <dbReference type="ChEBI" id="CHEBI:57540"/>
    </ligand>
</feature>
<feature type="binding site" evidence="1">
    <location>
        <position position="35"/>
    </location>
    <ligand>
        <name>NAD(+)</name>
        <dbReference type="ChEBI" id="CHEBI:57540"/>
    </ligand>
</feature>
<feature type="binding site" evidence="1">
    <location>
        <position position="36"/>
    </location>
    <ligand>
        <name>NADP(+)</name>
        <dbReference type="ChEBI" id="CHEBI:58349"/>
    </ligand>
</feature>
<feature type="binding site" evidence="1">
    <location>
        <begin position="99"/>
        <end position="101"/>
    </location>
    <ligand>
        <name>NAD(+)</name>
        <dbReference type="ChEBI" id="CHEBI:57540"/>
    </ligand>
</feature>
<feature type="binding site" evidence="1">
    <location>
        <begin position="123"/>
        <end position="126"/>
    </location>
    <ligand>
        <name>NAD(+)</name>
        <dbReference type="ChEBI" id="CHEBI:57540"/>
    </ligand>
</feature>
<feature type="binding site" evidence="1">
    <location>
        <position position="157"/>
    </location>
    <ligand>
        <name>(S)-2,3,4,5-tetrahydrodipicolinate</name>
        <dbReference type="ChEBI" id="CHEBI:16845"/>
    </ligand>
</feature>
<feature type="binding site" evidence="1">
    <location>
        <begin position="166"/>
        <end position="167"/>
    </location>
    <ligand>
        <name>(S)-2,3,4,5-tetrahydrodipicolinate</name>
        <dbReference type="ChEBI" id="CHEBI:16845"/>
    </ligand>
</feature>
<evidence type="ECO:0000255" key="1">
    <source>
        <dbReference type="HAMAP-Rule" id="MF_00102"/>
    </source>
</evidence>
<evidence type="ECO:0000305" key="2"/>
<keyword id="KW-0028">Amino-acid biosynthesis</keyword>
<keyword id="KW-0963">Cytoplasm</keyword>
<keyword id="KW-0220">Diaminopimelate biosynthesis</keyword>
<keyword id="KW-0457">Lysine biosynthesis</keyword>
<keyword id="KW-0520">NAD</keyword>
<keyword id="KW-0521">NADP</keyword>
<keyword id="KW-0560">Oxidoreductase</keyword>
<comment type="function">
    <text evidence="1">Catalyzes the conversion of 4-hydroxy-tetrahydrodipicolinate (HTPA) to tetrahydrodipicolinate.</text>
</comment>
<comment type="catalytic activity">
    <reaction evidence="1">
        <text>(S)-2,3,4,5-tetrahydrodipicolinate + NAD(+) + H2O = (2S,4S)-4-hydroxy-2,3,4,5-tetrahydrodipicolinate + NADH + H(+)</text>
        <dbReference type="Rhea" id="RHEA:35323"/>
        <dbReference type="ChEBI" id="CHEBI:15377"/>
        <dbReference type="ChEBI" id="CHEBI:15378"/>
        <dbReference type="ChEBI" id="CHEBI:16845"/>
        <dbReference type="ChEBI" id="CHEBI:57540"/>
        <dbReference type="ChEBI" id="CHEBI:57945"/>
        <dbReference type="ChEBI" id="CHEBI:67139"/>
        <dbReference type="EC" id="1.17.1.8"/>
    </reaction>
</comment>
<comment type="catalytic activity">
    <reaction evidence="1">
        <text>(S)-2,3,4,5-tetrahydrodipicolinate + NADP(+) + H2O = (2S,4S)-4-hydroxy-2,3,4,5-tetrahydrodipicolinate + NADPH + H(+)</text>
        <dbReference type="Rhea" id="RHEA:35331"/>
        <dbReference type="ChEBI" id="CHEBI:15377"/>
        <dbReference type="ChEBI" id="CHEBI:15378"/>
        <dbReference type="ChEBI" id="CHEBI:16845"/>
        <dbReference type="ChEBI" id="CHEBI:57783"/>
        <dbReference type="ChEBI" id="CHEBI:58349"/>
        <dbReference type="ChEBI" id="CHEBI:67139"/>
        <dbReference type="EC" id="1.17.1.8"/>
    </reaction>
</comment>
<comment type="pathway">
    <text evidence="1">Amino-acid biosynthesis; L-lysine biosynthesis via DAP pathway; (S)-tetrahydrodipicolinate from L-aspartate: step 4/4.</text>
</comment>
<comment type="subcellular location">
    <subcellularLocation>
        <location evidence="1">Cytoplasm</location>
    </subcellularLocation>
</comment>
<comment type="similarity">
    <text evidence="1">Belongs to the DapB family.</text>
</comment>
<comment type="caution">
    <text evidence="2">Was originally thought to be a dihydrodipicolinate reductase (DHDPR), catalyzing the conversion of dihydrodipicolinate to tetrahydrodipicolinate. However, it was shown in E.coli that the substrate of the enzymatic reaction is not dihydrodipicolinate (DHDP) but in fact (2S,4S)-4-hydroxy-2,3,4,5-tetrahydrodipicolinic acid (HTPA), the product released by the DapA-catalyzed reaction.</text>
</comment>
<organism>
    <name type="scientific">Histophilus somni (strain 129Pt)</name>
    <name type="common">Haemophilus somnus</name>
    <dbReference type="NCBI Taxonomy" id="205914"/>
    <lineage>
        <taxon>Bacteria</taxon>
        <taxon>Pseudomonadati</taxon>
        <taxon>Pseudomonadota</taxon>
        <taxon>Gammaproteobacteria</taxon>
        <taxon>Pasteurellales</taxon>
        <taxon>Pasteurellaceae</taxon>
        <taxon>Histophilus</taxon>
    </lineage>
</organism>
<name>DAPB_HISS1</name>
<protein>
    <recommendedName>
        <fullName evidence="1">4-hydroxy-tetrahydrodipicolinate reductase</fullName>
        <shortName evidence="1">HTPA reductase</shortName>
        <ecNumber evidence="1">1.17.1.8</ecNumber>
    </recommendedName>
</protein>